<accession>Q6ME73</accession>
<protein>
    <recommendedName>
        <fullName evidence="1">3-hydroxyacyl-[acyl-carrier-protein] dehydratase FabZ</fullName>
        <ecNumber evidence="1">4.2.1.59</ecNumber>
    </recommendedName>
    <alternativeName>
        <fullName evidence="1">(3R)-hydroxymyristoyl-[acyl-carrier-protein] dehydratase</fullName>
        <shortName evidence="1">(3R)-hydroxymyristoyl-ACP dehydrase</shortName>
    </alternativeName>
    <alternativeName>
        <fullName evidence="1">Beta-hydroxyacyl-ACP dehydratase</fullName>
    </alternativeName>
</protein>
<sequence>MVNLSDNPQALDINQIINILPHRYPFLLVDRVLEIDVEKGYILAQKNVTINESFFQGHFPNAPIMPGVLILEALAQAGGILVHLRGPGDKIAILLNVNHAKFRQPVKPGDVLHLKGEGLHFSSKGGRIKAEALVNQKIAAEAEIGFVFVDKSQI</sequence>
<dbReference type="EC" id="4.2.1.59" evidence="1"/>
<dbReference type="EMBL" id="BX908798">
    <property type="protein sequence ID" value="CAF23126.1"/>
    <property type="molecule type" value="Genomic_DNA"/>
</dbReference>
<dbReference type="RefSeq" id="WP_011174952.1">
    <property type="nucleotide sequence ID" value="NC_005861.2"/>
</dbReference>
<dbReference type="SMR" id="Q6ME73"/>
<dbReference type="STRING" id="264201.pc0402"/>
<dbReference type="KEGG" id="pcu:PC_RS01970"/>
<dbReference type="eggNOG" id="COG0764">
    <property type="taxonomic scope" value="Bacteria"/>
</dbReference>
<dbReference type="HOGENOM" id="CLU_078912_3_3_0"/>
<dbReference type="OrthoDB" id="9772788at2"/>
<dbReference type="Proteomes" id="UP000000529">
    <property type="component" value="Chromosome"/>
</dbReference>
<dbReference type="GO" id="GO:0005737">
    <property type="term" value="C:cytoplasm"/>
    <property type="evidence" value="ECO:0007669"/>
    <property type="project" value="UniProtKB-SubCell"/>
</dbReference>
<dbReference type="GO" id="GO:0016020">
    <property type="term" value="C:membrane"/>
    <property type="evidence" value="ECO:0007669"/>
    <property type="project" value="GOC"/>
</dbReference>
<dbReference type="GO" id="GO:0019171">
    <property type="term" value="F:(3R)-hydroxyacyl-[acyl-carrier-protein] dehydratase activity"/>
    <property type="evidence" value="ECO:0007669"/>
    <property type="project" value="UniProtKB-EC"/>
</dbReference>
<dbReference type="GO" id="GO:0006633">
    <property type="term" value="P:fatty acid biosynthetic process"/>
    <property type="evidence" value="ECO:0007669"/>
    <property type="project" value="UniProtKB-UniRule"/>
</dbReference>
<dbReference type="GO" id="GO:0009245">
    <property type="term" value="P:lipid A biosynthetic process"/>
    <property type="evidence" value="ECO:0007669"/>
    <property type="project" value="UniProtKB-UniRule"/>
</dbReference>
<dbReference type="CDD" id="cd01288">
    <property type="entry name" value="FabZ"/>
    <property type="match status" value="1"/>
</dbReference>
<dbReference type="FunFam" id="3.10.129.10:FF:000001">
    <property type="entry name" value="3-hydroxyacyl-[acyl-carrier-protein] dehydratase FabZ"/>
    <property type="match status" value="1"/>
</dbReference>
<dbReference type="Gene3D" id="3.10.129.10">
    <property type="entry name" value="Hotdog Thioesterase"/>
    <property type="match status" value="1"/>
</dbReference>
<dbReference type="HAMAP" id="MF_00406">
    <property type="entry name" value="FabZ"/>
    <property type="match status" value="1"/>
</dbReference>
<dbReference type="InterPro" id="IPR013114">
    <property type="entry name" value="FabA_FabZ"/>
</dbReference>
<dbReference type="InterPro" id="IPR010084">
    <property type="entry name" value="FabZ"/>
</dbReference>
<dbReference type="InterPro" id="IPR029069">
    <property type="entry name" value="HotDog_dom_sf"/>
</dbReference>
<dbReference type="NCBIfam" id="TIGR01750">
    <property type="entry name" value="fabZ"/>
    <property type="match status" value="1"/>
</dbReference>
<dbReference type="NCBIfam" id="NF000582">
    <property type="entry name" value="PRK00006.1"/>
    <property type="match status" value="1"/>
</dbReference>
<dbReference type="PANTHER" id="PTHR30272">
    <property type="entry name" value="3-HYDROXYACYL-[ACYL-CARRIER-PROTEIN] DEHYDRATASE"/>
    <property type="match status" value="1"/>
</dbReference>
<dbReference type="PANTHER" id="PTHR30272:SF1">
    <property type="entry name" value="3-HYDROXYACYL-[ACYL-CARRIER-PROTEIN] DEHYDRATASE"/>
    <property type="match status" value="1"/>
</dbReference>
<dbReference type="Pfam" id="PF07977">
    <property type="entry name" value="FabA"/>
    <property type="match status" value="1"/>
</dbReference>
<dbReference type="SUPFAM" id="SSF54637">
    <property type="entry name" value="Thioesterase/thiol ester dehydrase-isomerase"/>
    <property type="match status" value="1"/>
</dbReference>
<evidence type="ECO:0000255" key="1">
    <source>
        <dbReference type="HAMAP-Rule" id="MF_00406"/>
    </source>
</evidence>
<proteinExistence type="inferred from homology"/>
<organism>
    <name type="scientific">Protochlamydia amoebophila (strain UWE25)</name>
    <dbReference type="NCBI Taxonomy" id="264201"/>
    <lineage>
        <taxon>Bacteria</taxon>
        <taxon>Pseudomonadati</taxon>
        <taxon>Chlamydiota</taxon>
        <taxon>Chlamydiia</taxon>
        <taxon>Parachlamydiales</taxon>
        <taxon>Parachlamydiaceae</taxon>
        <taxon>Candidatus Protochlamydia</taxon>
    </lineage>
</organism>
<name>FABZ_PARUW</name>
<feature type="chain" id="PRO_0000091706" description="3-hydroxyacyl-[acyl-carrier-protein] dehydratase FabZ">
    <location>
        <begin position="1"/>
        <end position="154"/>
    </location>
</feature>
<feature type="active site" evidence="1">
    <location>
        <position position="58"/>
    </location>
</feature>
<keyword id="KW-0963">Cytoplasm</keyword>
<keyword id="KW-0441">Lipid A biosynthesis</keyword>
<keyword id="KW-0444">Lipid biosynthesis</keyword>
<keyword id="KW-0443">Lipid metabolism</keyword>
<keyword id="KW-0456">Lyase</keyword>
<keyword id="KW-1185">Reference proteome</keyword>
<gene>
    <name evidence="1" type="primary">fabZ</name>
    <name type="ordered locus">pc0402</name>
</gene>
<reference key="1">
    <citation type="journal article" date="2004" name="Science">
        <title>Illuminating the evolutionary history of chlamydiae.</title>
        <authorList>
            <person name="Horn M."/>
            <person name="Collingro A."/>
            <person name="Schmitz-Esser S."/>
            <person name="Beier C.L."/>
            <person name="Purkhold U."/>
            <person name="Fartmann B."/>
            <person name="Brandt P."/>
            <person name="Nyakatura G.J."/>
            <person name="Droege M."/>
            <person name="Frishman D."/>
            <person name="Rattei T."/>
            <person name="Mewes H.-W."/>
            <person name="Wagner M."/>
        </authorList>
    </citation>
    <scope>NUCLEOTIDE SEQUENCE [LARGE SCALE GENOMIC DNA]</scope>
    <source>
        <strain>UWE25</strain>
    </source>
</reference>
<comment type="function">
    <text evidence="1">Involved in unsaturated fatty acids biosynthesis. Catalyzes the dehydration of short chain beta-hydroxyacyl-ACPs and long chain saturated and unsaturated beta-hydroxyacyl-ACPs.</text>
</comment>
<comment type="catalytic activity">
    <reaction evidence="1">
        <text>a (3R)-hydroxyacyl-[ACP] = a (2E)-enoyl-[ACP] + H2O</text>
        <dbReference type="Rhea" id="RHEA:13097"/>
        <dbReference type="Rhea" id="RHEA-COMP:9925"/>
        <dbReference type="Rhea" id="RHEA-COMP:9945"/>
        <dbReference type="ChEBI" id="CHEBI:15377"/>
        <dbReference type="ChEBI" id="CHEBI:78784"/>
        <dbReference type="ChEBI" id="CHEBI:78827"/>
        <dbReference type="EC" id="4.2.1.59"/>
    </reaction>
</comment>
<comment type="subcellular location">
    <subcellularLocation>
        <location evidence="1">Cytoplasm</location>
    </subcellularLocation>
</comment>
<comment type="similarity">
    <text evidence="1">Belongs to the thioester dehydratase family. FabZ subfamily.</text>
</comment>